<reference key="1">
    <citation type="journal article" date="2006" name="Nat. Biotechnol.">
        <title>Genome sequence of the bioplastic-producing 'Knallgas' bacterium Ralstonia eutropha H16.</title>
        <authorList>
            <person name="Pohlmann A."/>
            <person name="Fricke W.F."/>
            <person name="Reinecke F."/>
            <person name="Kusian B."/>
            <person name="Liesegang H."/>
            <person name="Cramm R."/>
            <person name="Eitinger T."/>
            <person name="Ewering C."/>
            <person name="Poetter M."/>
            <person name="Schwartz E."/>
            <person name="Strittmatter A."/>
            <person name="Voss I."/>
            <person name="Gottschalk G."/>
            <person name="Steinbuechel A."/>
            <person name="Friedrich B."/>
            <person name="Bowien B."/>
        </authorList>
    </citation>
    <scope>NUCLEOTIDE SEQUENCE [LARGE SCALE GENOMIC DNA]</scope>
    <source>
        <strain>ATCC 17699 / DSM 428 / KCTC 22496 / NCIMB 10442 / H16 / Stanier 337</strain>
    </source>
</reference>
<keyword id="KW-0028">Amino-acid biosynthesis</keyword>
<keyword id="KW-0963">Cytoplasm</keyword>
<keyword id="KW-0413">Isomerase</keyword>
<keyword id="KW-0457">Lysine biosynthesis</keyword>
<keyword id="KW-1185">Reference proteome</keyword>
<sequence>MKLQFTKMHGAGNDFVVLDGIHQQIDLTPAQWRALASRHFGVGADQILIVEKPSRPDVDFRYRIVNADGSEVEHCGNGARCFVRFVTDKGMTDKRSVRVEVMNGVITLTLQDDGQVTVDMGAPELEPARVPFRAEGLPTRAEGADTLYGLEVNGRTEWISVVSMGNPHAVQVVDDVENFPVLQDGPVVEHHAAFPNRVNAGFMQVQDRHAIRLRVYERGAGETLACGTGACAAVVAGIRRGLLDSPVRVHTHGGDLTIAWDGGAEPVRMTGPATTVFEGSIDLAALPA</sequence>
<organism>
    <name type="scientific">Cupriavidus necator (strain ATCC 17699 / DSM 428 / KCTC 22496 / NCIMB 10442 / H16 / Stanier 337)</name>
    <name type="common">Ralstonia eutropha</name>
    <dbReference type="NCBI Taxonomy" id="381666"/>
    <lineage>
        <taxon>Bacteria</taxon>
        <taxon>Pseudomonadati</taxon>
        <taxon>Pseudomonadota</taxon>
        <taxon>Betaproteobacteria</taxon>
        <taxon>Burkholderiales</taxon>
        <taxon>Burkholderiaceae</taxon>
        <taxon>Cupriavidus</taxon>
    </lineage>
</organism>
<comment type="function">
    <text evidence="1">Catalyzes the stereoinversion of LL-2,6-diaminopimelate (L,L-DAP) to meso-diaminopimelate (meso-DAP), a precursor of L-lysine and an essential component of the bacterial peptidoglycan.</text>
</comment>
<comment type="catalytic activity">
    <reaction evidence="1">
        <text>(2S,6S)-2,6-diaminopimelate = meso-2,6-diaminopimelate</text>
        <dbReference type="Rhea" id="RHEA:15393"/>
        <dbReference type="ChEBI" id="CHEBI:57609"/>
        <dbReference type="ChEBI" id="CHEBI:57791"/>
        <dbReference type="EC" id="5.1.1.7"/>
    </reaction>
</comment>
<comment type="pathway">
    <text evidence="1">Amino-acid biosynthesis; L-lysine biosynthesis via DAP pathway; DL-2,6-diaminopimelate from LL-2,6-diaminopimelate: step 1/1.</text>
</comment>
<comment type="subunit">
    <text evidence="1">Homodimer.</text>
</comment>
<comment type="subcellular location">
    <subcellularLocation>
        <location evidence="1">Cytoplasm</location>
    </subcellularLocation>
</comment>
<comment type="similarity">
    <text evidence="1">Belongs to the diaminopimelate epimerase family.</text>
</comment>
<dbReference type="EC" id="5.1.1.7" evidence="1"/>
<dbReference type="EMBL" id="AM260479">
    <property type="protein sequence ID" value="CAJ91379.1"/>
    <property type="molecule type" value="Genomic_DNA"/>
</dbReference>
<dbReference type="RefSeq" id="WP_011614412.1">
    <property type="nucleotide sequence ID" value="NC_008313.1"/>
</dbReference>
<dbReference type="SMR" id="Q0KF42"/>
<dbReference type="STRING" id="381666.H16_A0227"/>
<dbReference type="KEGG" id="reh:H16_A0227"/>
<dbReference type="PATRIC" id="fig|381666.6.peg.586"/>
<dbReference type="eggNOG" id="COG0253">
    <property type="taxonomic scope" value="Bacteria"/>
</dbReference>
<dbReference type="HOGENOM" id="CLU_053306_1_1_4"/>
<dbReference type="OrthoDB" id="9805408at2"/>
<dbReference type="UniPathway" id="UPA00034">
    <property type="reaction ID" value="UER00025"/>
</dbReference>
<dbReference type="Proteomes" id="UP000008210">
    <property type="component" value="Chromosome 1"/>
</dbReference>
<dbReference type="GO" id="GO:0005829">
    <property type="term" value="C:cytosol"/>
    <property type="evidence" value="ECO:0007669"/>
    <property type="project" value="TreeGrafter"/>
</dbReference>
<dbReference type="GO" id="GO:0008837">
    <property type="term" value="F:diaminopimelate epimerase activity"/>
    <property type="evidence" value="ECO:0007669"/>
    <property type="project" value="UniProtKB-UniRule"/>
</dbReference>
<dbReference type="GO" id="GO:0009089">
    <property type="term" value="P:lysine biosynthetic process via diaminopimelate"/>
    <property type="evidence" value="ECO:0007669"/>
    <property type="project" value="UniProtKB-UniRule"/>
</dbReference>
<dbReference type="FunFam" id="3.10.310.10:FF:000001">
    <property type="entry name" value="Diaminopimelate epimerase"/>
    <property type="match status" value="1"/>
</dbReference>
<dbReference type="Gene3D" id="3.10.310.10">
    <property type="entry name" value="Diaminopimelate Epimerase, Chain A, domain 1"/>
    <property type="match status" value="2"/>
</dbReference>
<dbReference type="HAMAP" id="MF_00197">
    <property type="entry name" value="DAP_epimerase"/>
    <property type="match status" value="1"/>
</dbReference>
<dbReference type="InterPro" id="IPR018510">
    <property type="entry name" value="DAP_epimerase_AS"/>
</dbReference>
<dbReference type="InterPro" id="IPR001653">
    <property type="entry name" value="DAP_epimerase_DapF"/>
</dbReference>
<dbReference type="NCBIfam" id="TIGR00652">
    <property type="entry name" value="DapF"/>
    <property type="match status" value="1"/>
</dbReference>
<dbReference type="PANTHER" id="PTHR31689:SF0">
    <property type="entry name" value="DIAMINOPIMELATE EPIMERASE"/>
    <property type="match status" value="1"/>
</dbReference>
<dbReference type="PANTHER" id="PTHR31689">
    <property type="entry name" value="DIAMINOPIMELATE EPIMERASE, CHLOROPLASTIC"/>
    <property type="match status" value="1"/>
</dbReference>
<dbReference type="Pfam" id="PF01678">
    <property type="entry name" value="DAP_epimerase"/>
    <property type="match status" value="2"/>
</dbReference>
<dbReference type="SUPFAM" id="SSF54506">
    <property type="entry name" value="Diaminopimelate epimerase-like"/>
    <property type="match status" value="1"/>
</dbReference>
<dbReference type="PROSITE" id="PS01326">
    <property type="entry name" value="DAP_EPIMERASE"/>
    <property type="match status" value="1"/>
</dbReference>
<protein>
    <recommendedName>
        <fullName evidence="1">Diaminopimelate epimerase</fullName>
        <shortName evidence="1">DAP epimerase</shortName>
        <ecNumber evidence="1">5.1.1.7</ecNumber>
    </recommendedName>
    <alternativeName>
        <fullName evidence="1">PLP-independent amino acid racemase</fullName>
    </alternativeName>
</protein>
<accession>Q0KF42</accession>
<feature type="chain" id="PRO_1000011941" description="Diaminopimelate epimerase">
    <location>
        <begin position="1"/>
        <end position="288"/>
    </location>
</feature>
<feature type="active site" description="Proton donor" evidence="1">
    <location>
        <position position="75"/>
    </location>
</feature>
<feature type="active site" description="Proton acceptor" evidence="1">
    <location>
        <position position="226"/>
    </location>
</feature>
<feature type="binding site" evidence="1">
    <location>
        <position position="13"/>
    </location>
    <ligand>
        <name>substrate</name>
    </ligand>
</feature>
<feature type="binding site" evidence="1">
    <location>
        <position position="46"/>
    </location>
    <ligand>
        <name>substrate</name>
    </ligand>
</feature>
<feature type="binding site" evidence="1">
    <location>
        <position position="66"/>
    </location>
    <ligand>
        <name>substrate</name>
    </ligand>
</feature>
<feature type="binding site" evidence="1">
    <location>
        <begin position="76"/>
        <end position="77"/>
    </location>
    <ligand>
        <name>substrate</name>
    </ligand>
</feature>
<feature type="binding site" evidence="1">
    <location>
        <position position="166"/>
    </location>
    <ligand>
        <name>substrate</name>
    </ligand>
</feature>
<feature type="binding site" evidence="1">
    <location>
        <position position="199"/>
    </location>
    <ligand>
        <name>substrate</name>
    </ligand>
</feature>
<feature type="binding site" evidence="1">
    <location>
        <begin position="217"/>
        <end position="218"/>
    </location>
    <ligand>
        <name>substrate</name>
    </ligand>
</feature>
<feature type="binding site" evidence="1">
    <location>
        <begin position="227"/>
        <end position="228"/>
    </location>
    <ligand>
        <name>substrate</name>
    </ligand>
</feature>
<feature type="site" description="Could be important to modulate the pK values of the two catalytic cysteine residues" evidence="1">
    <location>
        <position position="168"/>
    </location>
</feature>
<feature type="site" description="Could be important to modulate the pK values of the two catalytic cysteine residues" evidence="1">
    <location>
        <position position="217"/>
    </location>
</feature>
<proteinExistence type="inferred from homology"/>
<gene>
    <name evidence="1" type="primary">dapF</name>
    <name type="ordered locus">H16_A0227</name>
</gene>
<evidence type="ECO:0000255" key="1">
    <source>
        <dbReference type="HAMAP-Rule" id="MF_00197"/>
    </source>
</evidence>
<name>DAPF_CUPNH</name>